<proteinExistence type="evidence at protein level"/>
<evidence type="ECO:0000250" key="1"/>
<evidence type="ECO:0000250" key="2">
    <source>
        <dbReference type="UniProtKB" id="Q96C86"/>
    </source>
</evidence>
<evidence type="ECO:0000256" key="3">
    <source>
        <dbReference type="SAM" id="MobiDB-lite"/>
    </source>
</evidence>
<evidence type="ECO:0000305" key="4"/>
<evidence type="ECO:0007744" key="5">
    <source>
    </source>
</evidence>
<evidence type="ECO:0007744" key="6">
    <source>
    </source>
</evidence>
<evidence type="ECO:0007829" key="7">
    <source>
        <dbReference type="PDB" id="1VLR"/>
    </source>
</evidence>
<organism>
    <name type="scientific">Mus musculus</name>
    <name type="common">Mouse</name>
    <dbReference type="NCBI Taxonomy" id="10090"/>
    <lineage>
        <taxon>Eukaryota</taxon>
        <taxon>Metazoa</taxon>
        <taxon>Chordata</taxon>
        <taxon>Craniata</taxon>
        <taxon>Vertebrata</taxon>
        <taxon>Euteleostomi</taxon>
        <taxon>Mammalia</taxon>
        <taxon>Eutheria</taxon>
        <taxon>Euarchontoglires</taxon>
        <taxon>Glires</taxon>
        <taxon>Rodentia</taxon>
        <taxon>Myomorpha</taxon>
        <taxon>Muroidea</taxon>
        <taxon>Muridae</taxon>
        <taxon>Murinae</taxon>
        <taxon>Mus</taxon>
        <taxon>Mus</taxon>
    </lineage>
</organism>
<feature type="initiator methionine" description="Removed" evidence="2">
    <location>
        <position position="1"/>
    </location>
</feature>
<feature type="chain" id="PRO_0000109795" description="m7GpppX diphosphatase">
    <location>
        <begin position="2"/>
        <end position="338"/>
    </location>
</feature>
<feature type="region of interest" description="Disordered" evidence="3">
    <location>
        <begin position="1"/>
        <end position="36"/>
    </location>
</feature>
<feature type="short sequence motif" description="nuclear localization signal (NLS)" evidence="1">
    <location>
        <begin position="9"/>
        <end position="12"/>
    </location>
</feature>
<feature type="short sequence motif" description="nuclear export sequence (NES)" evidence="1">
    <location>
        <begin position="141"/>
        <end position="153"/>
    </location>
</feature>
<feature type="short sequence motif" description="Histidine triad motif" evidence="1">
    <location>
        <begin position="274"/>
        <end position="278"/>
    </location>
</feature>
<feature type="active site" description="Nucleophile" evidence="1">
    <location>
        <position position="276"/>
    </location>
</feature>
<feature type="binding site" evidence="1">
    <location>
        <position position="174"/>
    </location>
    <ligand>
        <name>substrate</name>
    </ligand>
</feature>
<feature type="binding site" evidence="1">
    <location>
        <position position="184"/>
    </location>
    <ligand>
        <name>substrate</name>
    </ligand>
</feature>
<feature type="binding site" evidence="1">
    <location>
        <position position="204"/>
    </location>
    <ligand>
        <name>substrate</name>
    </ligand>
</feature>
<feature type="binding site" evidence="1">
    <location>
        <position position="206"/>
    </location>
    <ligand>
        <name>substrate</name>
    </ligand>
</feature>
<feature type="binding site" evidence="1">
    <location>
        <begin position="267"/>
        <end position="278"/>
    </location>
    <ligand>
        <name>substrate</name>
    </ligand>
</feature>
<feature type="modified residue" description="N-acetylalanine" evidence="2">
    <location>
        <position position="2"/>
    </location>
</feature>
<feature type="modified residue" description="Phosphoserine" evidence="2">
    <location>
        <position position="23"/>
    </location>
</feature>
<feature type="modified residue" description="Phosphoserine" evidence="5">
    <location>
        <position position="100"/>
    </location>
</feature>
<feature type="modified residue" description="N6-acetyllysine" evidence="6">
    <location>
        <position position="137"/>
    </location>
</feature>
<feature type="modified residue" description="N6-acetyllysine" evidence="2">
    <location>
        <position position="141"/>
    </location>
</feature>
<feature type="sequence conflict" description="In Ref. 2; BAC37194." evidence="4" ref="2">
    <original>K</original>
    <variation>E</variation>
    <location>
        <position position="141"/>
    </location>
</feature>
<feature type="strand" evidence="7">
    <location>
        <begin position="42"/>
        <end position="44"/>
    </location>
</feature>
<feature type="strand" evidence="7">
    <location>
        <begin position="47"/>
        <end position="55"/>
    </location>
</feature>
<feature type="turn" evidence="7">
    <location>
        <begin position="56"/>
        <end position="59"/>
    </location>
</feature>
<feature type="strand" evidence="7">
    <location>
        <begin position="60"/>
        <end position="67"/>
    </location>
</feature>
<feature type="strand" evidence="7">
    <location>
        <begin position="77"/>
        <end position="85"/>
    </location>
</feature>
<feature type="helix" evidence="7">
    <location>
        <begin position="90"/>
        <end position="97"/>
    </location>
</feature>
<feature type="strand" evidence="7">
    <location>
        <begin position="102"/>
        <end position="108"/>
    </location>
</feature>
<feature type="strand" evidence="7">
    <location>
        <begin position="110"/>
        <end position="118"/>
    </location>
</feature>
<feature type="helix" evidence="7">
    <location>
        <begin position="121"/>
        <end position="124"/>
    </location>
</feature>
<feature type="strand" evidence="7">
    <location>
        <begin position="126"/>
        <end position="133"/>
    </location>
</feature>
<feature type="helix" evidence="7">
    <location>
        <begin position="136"/>
        <end position="142"/>
    </location>
</feature>
<feature type="strand" evidence="7">
    <location>
        <begin position="147"/>
        <end position="152"/>
    </location>
</feature>
<feature type="helix" evidence="7">
    <location>
        <begin position="154"/>
        <end position="159"/>
    </location>
</feature>
<feature type="helix" evidence="7">
    <location>
        <begin position="161"/>
        <end position="168"/>
    </location>
</feature>
<feature type="helix" evidence="7">
    <location>
        <begin position="173"/>
        <end position="179"/>
    </location>
</feature>
<feature type="strand" evidence="7">
    <location>
        <begin position="182"/>
        <end position="184"/>
    </location>
</feature>
<feature type="strand" evidence="7">
    <location>
        <begin position="189"/>
        <end position="192"/>
    </location>
</feature>
<feature type="turn" evidence="7">
    <location>
        <begin position="195"/>
        <end position="197"/>
    </location>
</feature>
<feature type="strand" evidence="7">
    <location>
        <begin position="199"/>
        <end position="203"/>
    </location>
</feature>
<feature type="strand" evidence="7">
    <location>
        <begin position="216"/>
        <end position="224"/>
    </location>
</feature>
<feature type="helix" evidence="7">
    <location>
        <begin position="229"/>
        <end position="231"/>
    </location>
</feature>
<feature type="helix" evidence="7">
    <location>
        <begin position="234"/>
        <end position="236"/>
    </location>
</feature>
<feature type="helix" evidence="7">
    <location>
        <begin position="237"/>
        <end position="255"/>
    </location>
</feature>
<feature type="helix" evidence="7">
    <location>
        <begin position="259"/>
        <end position="261"/>
    </location>
</feature>
<feature type="strand" evidence="7">
    <location>
        <begin position="262"/>
        <end position="269"/>
    </location>
</feature>
<feature type="strand" evidence="7">
    <location>
        <begin position="271"/>
        <end position="274"/>
    </location>
</feature>
<feature type="strand" evidence="7">
    <location>
        <begin position="276"/>
        <end position="281"/>
    </location>
</feature>
<feature type="turn" evidence="7">
    <location>
        <begin position="291"/>
        <end position="293"/>
    </location>
</feature>
<feature type="strand" evidence="7">
    <location>
        <begin position="294"/>
        <end position="296"/>
    </location>
</feature>
<feature type="helix" evidence="7">
    <location>
        <begin position="297"/>
        <end position="306"/>
    </location>
</feature>
<feature type="helix" evidence="7">
    <location>
        <begin position="310"/>
        <end position="313"/>
    </location>
</feature>
<feature type="strand" evidence="7">
    <location>
        <begin position="316"/>
        <end position="321"/>
    </location>
</feature>
<feature type="helix" evidence="7">
    <location>
        <begin position="325"/>
        <end position="336"/>
    </location>
</feature>
<dbReference type="EC" id="3.6.1.59" evidence="2"/>
<dbReference type="EMBL" id="AY040775">
    <property type="protein sequence ID" value="AAK91764.1"/>
    <property type="molecule type" value="mRNA"/>
</dbReference>
<dbReference type="EMBL" id="AK005584">
    <property type="protein sequence ID" value="BAB24138.1"/>
    <property type="molecule type" value="mRNA"/>
</dbReference>
<dbReference type="EMBL" id="AK078253">
    <property type="protein sequence ID" value="BAC37194.1"/>
    <property type="molecule type" value="mRNA"/>
</dbReference>
<dbReference type="EMBL" id="BC016273">
    <property type="protein sequence ID" value="AAH16273.1"/>
    <property type="molecule type" value="mRNA"/>
</dbReference>
<dbReference type="CCDS" id="CCDS22957.1"/>
<dbReference type="RefSeq" id="NP_081306.1">
    <property type="nucleotide sequence ID" value="NM_027030.2"/>
</dbReference>
<dbReference type="PDB" id="1VLR">
    <property type="method" value="X-ray"/>
    <property type="resolution" value="1.83 A"/>
    <property type="chains" value="A/B=1-338"/>
</dbReference>
<dbReference type="PDBsum" id="1VLR"/>
<dbReference type="SMR" id="Q9DAR7"/>
<dbReference type="BioGRID" id="213348">
    <property type="interactions" value="13"/>
</dbReference>
<dbReference type="FunCoup" id="Q9DAR7">
    <property type="interactions" value="3565"/>
</dbReference>
<dbReference type="IntAct" id="Q9DAR7">
    <property type="interactions" value="1"/>
</dbReference>
<dbReference type="MINT" id="Q9DAR7"/>
<dbReference type="STRING" id="10090.ENSMUSP00000034539"/>
<dbReference type="ChEMBL" id="CHEMBL4105708"/>
<dbReference type="GlyGen" id="Q9DAR7">
    <property type="glycosylation" value="1 site, 1 N-linked glycan (1 site)"/>
</dbReference>
<dbReference type="iPTMnet" id="Q9DAR7"/>
<dbReference type="PhosphoSitePlus" id="Q9DAR7"/>
<dbReference type="SwissPalm" id="Q9DAR7"/>
<dbReference type="jPOST" id="Q9DAR7"/>
<dbReference type="PaxDb" id="10090-ENSMUSP00000034539"/>
<dbReference type="PeptideAtlas" id="Q9DAR7"/>
<dbReference type="ProteomicsDB" id="279393"/>
<dbReference type="Pumba" id="Q9DAR7"/>
<dbReference type="Antibodypedia" id="32998">
    <property type="antibodies" value="238 antibodies from 24 providers"/>
</dbReference>
<dbReference type="DNASU" id="69305"/>
<dbReference type="Ensembl" id="ENSMUST00000034539.12">
    <property type="protein sequence ID" value="ENSMUSP00000034539.6"/>
    <property type="gene ID" value="ENSMUSG00000032040.16"/>
</dbReference>
<dbReference type="GeneID" id="69305"/>
<dbReference type="KEGG" id="mmu:69305"/>
<dbReference type="UCSC" id="uc009osp.1">
    <property type="organism name" value="mouse"/>
</dbReference>
<dbReference type="AGR" id="MGI:1916555"/>
<dbReference type="CTD" id="28960"/>
<dbReference type="MGI" id="MGI:1916555">
    <property type="gene designation" value="Dcps"/>
</dbReference>
<dbReference type="VEuPathDB" id="HostDB:ENSMUSG00000032040"/>
<dbReference type="eggNOG" id="KOG3969">
    <property type="taxonomic scope" value="Eukaryota"/>
</dbReference>
<dbReference type="GeneTree" id="ENSGT00390000003924"/>
<dbReference type="HOGENOM" id="CLU_041045_2_0_1"/>
<dbReference type="InParanoid" id="Q9DAR7"/>
<dbReference type="OMA" id="HVHINPI"/>
<dbReference type="OrthoDB" id="10264956at2759"/>
<dbReference type="PhylomeDB" id="Q9DAR7"/>
<dbReference type="TreeFam" id="TF105622"/>
<dbReference type="BRENDA" id="3.6.1.59">
    <property type="organism ID" value="3474"/>
</dbReference>
<dbReference type="Reactome" id="R-MMU-429958">
    <property type="pathway name" value="mRNA decay by 3' to 5' exoribonuclease"/>
</dbReference>
<dbReference type="BioGRID-ORCS" id="69305">
    <property type="hits" value="22 hits in 82 CRISPR screens"/>
</dbReference>
<dbReference type="ChiTaRS" id="Dcps">
    <property type="organism name" value="mouse"/>
</dbReference>
<dbReference type="EvolutionaryTrace" id="Q9DAR7"/>
<dbReference type="PRO" id="PR:Q9DAR7"/>
<dbReference type="Proteomes" id="UP000000589">
    <property type="component" value="Chromosome 9"/>
</dbReference>
<dbReference type="RNAct" id="Q9DAR7">
    <property type="molecule type" value="protein"/>
</dbReference>
<dbReference type="Bgee" id="ENSMUSG00000032040">
    <property type="expression patterns" value="Expressed in spinal cord lateral wall and 246 other cell types or tissues"/>
</dbReference>
<dbReference type="ExpressionAtlas" id="Q9DAR7">
    <property type="expression patterns" value="baseline and differential"/>
</dbReference>
<dbReference type="GO" id="GO:0005737">
    <property type="term" value="C:cytoplasm"/>
    <property type="evidence" value="ECO:0000250"/>
    <property type="project" value="UniProtKB"/>
</dbReference>
<dbReference type="GO" id="GO:0005829">
    <property type="term" value="C:cytosol"/>
    <property type="evidence" value="ECO:0007669"/>
    <property type="project" value="Ensembl"/>
</dbReference>
<dbReference type="GO" id="GO:0005739">
    <property type="term" value="C:mitochondrion"/>
    <property type="evidence" value="ECO:0007669"/>
    <property type="project" value="Ensembl"/>
</dbReference>
<dbReference type="GO" id="GO:0005654">
    <property type="term" value="C:nucleoplasm"/>
    <property type="evidence" value="ECO:0007669"/>
    <property type="project" value="Ensembl"/>
</dbReference>
<dbReference type="GO" id="GO:0005634">
    <property type="term" value="C:nucleus"/>
    <property type="evidence" value="ECO:0000250"/>
    <property type="project" value="UniProtKB"/>
</dbReference>
<dbReference type="GO" id="GO:0140932">
    <property type="term" value="F:5'-(N(7)-methyl 5'-triphosphoguanosine)-[mRNA] diphosphatase activity"/>
    <property type="evidence" value="ECO:0000250"/>
    <property type="project" value="UniProtKB"/>
</dbReference>
<dbReference type="GO" id="GO:0042802">
    <property type="term" value="F:identical protein binding"/>
    <property type="evidence" value="ECO:0007669"/>
    <property type="project" value="Ensembl"/>
</dbReference>
<dbReference type="GO" id="GO:0000340">
    <property type="term" value="F:RNA 7-methylguanosine cap binding"/>
    <property type="evidence" value="ECO:0000250"/>
    <property type="project" value="UniProtKB"/>
</dbReference>
<dbReference type="GO" id="GO:0000290">
    <property type="term" value="P:deadenylation-dependent decapping of nuclear-transcribed mRNA"/>
    <property type="evidence" value="ECO:0007669"/>
    <property type="project" value="InterPro"/>
</dbReference>
<dbReference type="GO" id="GO:0045292">
    <property type="term" value="P:mRNA cis splicing, via spliceosome"/>
    <property type="evidence" value="ECO:0000250"/>
    <property type="project" value="UniProtKB"/>
</dbReference>
<dbReference type="FunFam" id="3.30.200.40:FF:000001">
    <property type="entry name" value="m7GpppX diphosphatase"/>
    <property type="match status" value="1"/>
</dbReference>
<dbReference type="FunFam" id="3.30.428.10:FF:000006">
    <property type="entry name" value="m7GpppX diphosphatase"/>
    <property type="match status" value="1"/>
</dbReference>
<dbReference type="Gene3D" id="3.30.428.10">
    <property type="entry name" value="HIT-like"/>
    <property type="match status" value="1"/>
</dbReference>
<dbReference type="Gene3D" id="3.30.200.40">
    <property type="entry name" value="Scavenger mRNA decapping enzyme, N-terminal domain"/>
    <property type="match status" value="1"/>
</dbReference>
<dbReference type="InterPro" id="IPR008594">
    <property type="entry name" value="DcpS/DCS2"/>
</dbReference>
<dbReference type="InterPro" id="IPR019808">
    <property type="entry name" value="Histidine_triad_CS"/>
</dbReference>
<dbReference type="InterPro" id="IPR036265">
    <property type="entry name" value="HIT-like_sf"/>
</dbReference>
<dbReference type="InterPro" id="IPR011145">
    <property type="entry name" value="Scavenger_mRNA_decap_enz_N"/>
</dbReference>
<dbReference type="PANTHER" id="PTHR12978">
    <property type="entry name" value="HISTIDINE TRIAD HIT PROTEIN MEMBER"/>
    <property type="match status" value="1"/>
</dbReference>
<dbReference type="PANTHER" id="PTHR12978:SF0">
    <property type="entry name" value="M7GPPPX DIPHOSPHATASE"/>
    <property type="match status" value="1"/>
</dbReference>
<dbReference type="Pfam" id="PF05652">
    <property type="entry name" value="DcpS"/>
    <property type="match status" value="1"/>
</dbReference>
<dbReference type="Pfam" id="PF11969">
    <property type="entry name" value="DcpS_C"/>
    <property type="match status" value="1"/>
</dbReference>
<dbReference type="PIRSF" id="PIRSF028973">
    <property type="entry name" value="Scavenger_mRNA_decap_enz"/>
    <property type="match status" value="1"/>
</dbReference>
<dbReference type="SUPFAM" id="SSF54197">
    <property type="entry name" value="HIT-like"/>
    <property type="match status" value="1"/>
</dbReference>
<dbReference type="SUPFAM" id="SSF102860">
    <property type="entry name" value="mRNA decapping enzyme DcpS N-terminal domain"/>
    <property type="match status" value="1"/>
</dbReference>
<dbReference type="PROSITE" id="PS00892">
    <property type="entry name" value="HIT_1"/>
    <property type="match status" value="1"/>
</dbReference>
<reference key="1">
    <citation type="submission" date="2001-06" db="EMBL/GenBank/DDBJ databases">
        <title>Cloning and characterization of a novel member of the histidine triad protein family (HINT-5) in different vertebrate species.</title>
        <authorList>
            <person name="Huang C.-H."/>
            <person name="Peng J."/>
            <person name="Chen H."/>
            <person name="Chen Y."/>
        </authorList>
    </citation>
    <scope>NUCLEOTIDE SEQUENCE [MRNA]</scope>
    <source>
        <strain>BALB/cJ</strain>
        <tissue>Brain</tissue>
    </source>
</reference>
<reference key="2">
    <citation type="journal article" date="2005" name="Science">
        <title>The transcriptional landscape of the mammalian genome.</title>
        <authorList>
            <person name="Carninci P."/>
            <person name="Kasukawa T."/>
            <person name="Katayama S."/>
            <person name="Gough J."/>
            <person name="Frith M.C."/>
            <person name="Maeda N."/>
            <person name="Oyama R."/>
            <person name="Ravasi T."/>
            <person name="Lenhard B."/>
            <person name="Wells C."/>
            <person name="Kodzius R."/>
            <person name="Shimokawa K."/>
            <person name="Bajic V.B."/>
            <person name="Brenner S.E."/>
            <person name="Batalov S."/>
            <person name="Forrest A.R."/>
            <person name="Zavolan M."/>
            <person name="Davis M.J."/>
            <person name="Wilming L.G."/>
            <person name="Aidinis V."/>
            <person name="Allen J.E."/>
            <person name="Ambesi-Impiombato A."/>
            <person name="Apweiler R."/>
            <person name="Aturaliya R.N."/>
            <person name="Bailey T.L."/>
            <person name="Bansal M."/>
            <person name="Baxter L."/>
            <person name="Beisel K.W."/>
            <person name="Bersano T."/>
            <person name="Bono H."/>
            <person name="Chalk A.M."/>
            <person name="Chiu K.P."/>
            <person name="Choudhary V."/>
            <person name="Christoffels A."/>
            <person name="Clutterbuck D.R."/>
            <person name="Crowe M.L."/>
            <person name="Dalla E."/>
            <person name="Dalrymple B.P."/>
            <person name="de Bono B."/>
            <person name="Della Gatta G."/>
            <person name="di Bernardo D."/>
            <person name="Down T."/>
            <person name="Engstrom P."/>
            <person name="Fagiolini M."/>
            <person name="Faulkner G."/>
            <person name="Fletcher C.F."/>
            <person name="Fukushima T."/>
            <person name="Furuno M."/>
            <person name="Futaki S."/>
            <person name="Gariboldi M."/>
            <person name="Georgii-Hemming P."/>
            <person name="Gingeras T.R."/>
            <person name="Gojobori T."/>
            <person name="Green R.E."/>
            <person name="Gustincich S."/>
            <person name="Harbers M."/>
            <person name="Hayashi Y."/>
            <person name="Hensch T.K."/>
            <person name="Hirokawa N."/>
            <person name="Hill D."/>
            <person name="Huminiecki L."/>
            <person name="Iacono M."/>
            <person name="Ikeo K."/>
            <person name="Iwama A."/>
            <person name="Ishikawa T."/>
            <person name="Jakt M."/>
            <person name="Kanapin A."/>
            <person name="Katoh M."/>
            <person name="Kawasawa Y."/>
            <person name="Kelso J."/>
            <person name="Kitamura H."/>
            <person name="Kitano H."/>
            <person name="Kollias G."/>
            <person name="Krishnan S.P."/>
            <person name="Kruger A."/>
            <person name="Kummerfeld S.K."/>
            <person name="Kurochkin I.V."/>
            <person name="Lareau L.F."/>
            <person name="Lazarevic D."/>
            <person name="Lipovich L."/>
            <person name="Liu J."/>
            <person name="Liuni S."/>
            <person name="McWilliam S."/>
            <person name="Madan Babu M."/>
            <person name="Madera M."/>
            <person name="Marchionni L."/>
            <person name="Matsuda H."/>
            <person name="Matsuzawa S."/>
            <person name="Miki H."/>
            <person name="Mignone F."/>
            <person name="Miyake S."/>
            <person name="Morris K."/>
            <person name="Mottagui-Tabar S."/>
            <person name="Mulder N."/>
            <person name="Nakano N."/>
            <person name="Nakauchi H."/>
            <person name="Ng P."/>
            <person name="Nilsson R."/>
            <person name="Nishiguchi S."/>
            <person name="Nishikawa S."/>
            <person name="Nori F."/>
            <person name="Ohara O."/>
            <person name="Okazaki Y."/>
            <person name="Orlando V."/>
            <person name="Pang K.C."/>
            <person name="Pavan W.J."/>
            <person name="Pavesi G."/>
            <person name="Pesole G."/>
            <person name="Petrovsky N."/>
            <person name="Piazza S."/>
            <person name="Reed J."/>
            <person name="Reid J.F."/>
            <person name="Ring B.Z."/>
            <person name="Ringwald M."/>
            <person name="Rost B."/>
            <person name="Ruan Y."/>
            <person name="Salzberg S.L."/>
            <person name="Sandelin A."/>
            <person name="Schneider C."/>
            <person name="Schoenbach C."/>
            <person name="Sekiguchi K."/>
            <person name="Semple C.A."/>
            <person name="Seno S."/>
            <person name="Sessa L."/>
            <person name="Sheng Y."/>
            <person name="Shibata Y."/>
            <person name="Shimada H."/>
            <person name="Shimada K."/>
            <person name="Silva D."/>
            <person name="Sinclair B."/>
            <person name="Sperling S."/>
            <person name="Stupka E."/>
            <person name="Sugiura K."/>
            <person name="Sultana R."/>
            <person name="Takenaka Y."/>
            <person name="Taki K."/>
            <person name="Tammoja K."/>
            <person name="Tan S.L."/>
            <person name="Tang S."/>
            <person name="Taylor M.S."/>
            <person name="Tegner J."/>
            <person name="Teichmann S.A."/>
            <person name="Ueda H.R."/>
            <person name="van Nimwegen E."/>
            <person name="Verardo R."/>
            <person name="Wei C.L."/>
            <person name="Yagi K."/>
            <person name="Yamanishi H."/>
            <person name="Zabarovsky E."/>
            <person name="Zhu S."/>
            <person name="Zimmer A."/>
            <person name="Hide W."/>
            <person name="Bult C."/>
            <person name="Grimmond S.M."/>
            <person name="Teasdale R.D."/>
            <person name="Liu E.T."/>
            <person name="Brusic V."/>
            <person name="Quackenbush J."/>
            <person name="Wahlestedt C."/>
            <person name="Mattick J.S."/>
            <person name="Hume D.A."/>
            <person name="Kai C."/>
            <person name="Sasaki D."/>
            <person name="Tomaru Y."/>
            <person name="Fukuda S."/>
            <person name="Kanamori-Katayama M."/>
            <person name="Suzuki M."/>
            <person name="Aoki J."/>
            <person name="Arakawa T."/>
            <person name="Iida J."/>
            <person name="Imamura K."/>
            <person name="Itoh M."/>
            <person name="Kato T."/>
            <person name="Kawaji H."/>
            <person name="Kawagashira N."/>
            <person name="Kawashima T."/>
            <person name="Kojima M."/>
            <person name="Kondo S."/>
            <person name="Konno H."/>
            <person name="Nakano K."/>
            <person name="Ninomiya N."/>
            <person name="Nishio T."/>
            <person name="Okada M."/>
            <person name="Plessy C."/>
            <person name="Shibata K."/>
            <person name="Shiraki T."/>
            <person name="Suzuki S."/>
            <person name="Tagami M."/>
            <person name="Waki K."/>
            <person name="Watahiki A."/>
            <person name="Okamura-Oho Y."/>
            <person name="Suzuki H."/>
            <person name="Kawai J."/>
            <person name="Hayashizaki Y."/>
        </authorList>
    </citation>
    <scope>NUCLEOTIDE SEQUENCE [LARGE SCALE MRNA]</scope>
    <source>
        <strain>C57BL/6J</strain>
        <tissue>Olfactory bulb</tissue>
        <tissue>Testis</tissue>
    </source>
</reference>
<reference key="3">
    <citation type="journal article" date="2004" name="Genome Res.">
        <title>The status, quality, and expansion of the NIH full-length cDNA project: the Mammalian Gene Collection (MGC).</title>
        <authorList>
            <consortium name="The MGC Project Team"/>
        </authorList>
    </citation>
    <scope>NUCLEOTIDE SEQUENCE [LARGE SCALE MRNA]</scope>
    <source>
        <strain>C57BL/6J</strain>
        <tissue>Eye</tissue>
    </source>
</reference>
<reference key="4">
    <citation type="journal article" date="2007" name="Proc. Natl. Acad. Sci. U.S.A.">
        <title>Large-scale phosphorylation analysis of mouse liver.</title>
        <authorList>
            <person name="Villen J."/>
            <person name="Beausoleil S.A."/>
            <person name="Gerber S.A."/>
            <person name="Gygi S.P."/>
        </authorList>
    </citation>
    <scope>IDENTIFICATION BY MASS SPECTROMETRY [LARGE SCALE ANALYSIS]</scope>
    <source>
        <tissue>Liver</tissue>
    </source>
</reference>
<reference key="5">
    <citation type="journal article" date="2010" name="Cell">
        <title>A tissue-specific atlas of mouse protein phosphorylation and expression.</title>
        <authorList>
            <person name="Huttlin E.L."/>
            <person name="Jedrychowski M.P."/>
            <person name="Elias J.E."/>
            <person name="Goswami T."/>
            <person name="Rad R."/>
            <person name="Beausoleil S.A."/>
            <person name="Villen J."/>
            <person name="Haas W."/>
            <person name="Sowa M.E."/>
            <person name="Gygi S.P."/>
        </authorList>
    </citation>
    <scope>PHOSPHORYLATION [LARGE SCALE ANALYSIS] AT SER-100</scope>
    <scope>IDENTIFICATION BY MASS SPECTROMETRY [LARGE SCALE ANALYSIS]</scope>
    <source>
        <tissue>Brain</tissue>
        <tissue>Brown adipose tissue</tissue>
        <tissue>Heart</tissue>
        <tissue>Kidney</tissue>
        <tissue>Liver</tissue>
        <tissue>Lung</tissue>
        <tissue>Pancreas</tissue>
        <tissue>Spleen</tissue>
        <tissue>Testis</tissue>
    </source>
</reference>
<reference key="6">
    <citation type="journal article" date="2013" name="Mol. Cell">
        <title>SIRT5-mediated lysine desuccinylation impacts diverse metabolic pathways.</title>
        <authorList>
            <person name="Park J."/>
            <person name="Chen Y."/>
            <person name="Tishkoff D.X."/>
            <person name="Peng C."/>
            <person name="Tan M."/>
            <person name="Dai L."/>
            <person name="Xie Z."/>
            <person name="Zhang Y."/>
            <person name="Zwaans B.M."/>
            <person name="Skinner M.E."/>
            <person name="Lombard D.B."/>
            <person name="Zhao Y."/>
        </authorList>
    </citation>
    <scope>ACETYLATION [LARGE SCALE ANALYSIS] AT LYS-137</scope>
    <scope>IDENTIFICATION BY MASS SPECTROMETRY [LARGE SCALE ANALYSIS]</scope>
    <source>
        <tissue>Embryonic fibroblast</tissue>
    </source>
</reference>
<reference key="7">
    <citation type="submission" date="2004-08" db="PDB data bank">
        <title>Crystal structure of mRNA decapping enzyme (DCPS) from Mus musculus at 1.83 A resolution.</title>
        <authorList>
            <consortium name="Joint center for structural genomics (JCSG)"/>
        </authorList>
    </citation>
    <scope>X-RAY CRYSTALLOGRAPHY (1.83 ANGSTROMS)</scope>
</reference>
<protein>
    <recommendedName>
        <fullName>m7GpppX diphosphatase</fullName>
        <ecNumber evidence="2">3.6.1.59</ecNumber>
    </recommendedName>
    <alternativeName>
        <fullName>DCS-1</fullName>
    </alternativeName>
    <alternativeName>
        <fullName>Decapping scavenger enzyme</fullName>
    </alternativeName>
    <alternativeName>
        <fullName>Hint-related 7meGMP-directed hydrolase</fullName>
    </alternativeName>
    <alternativeName>
        <fullName>Histidine triad nucleotide-binding protein 5</fullName>
    </alternativeName>
    <alternativeName>
        <fullName>Histidine triad protein member 5</fullName>
        <shortName>HINT-5</shortName>
    </alternativeName>
    <alternativeName>
        <fullName>Scavenger mRNA-decapping enzyme DcpS</fullName>
    </alternativeName>
</protein>
<name>DCPS_MOUSE</name>
<accession>Q9DAR7</accession>
<accession>Q8C5I7</accession>
<sequence>MADTAPQLKRKREQEAEEAETPSTEEKEAGVGNGTSAPVRLPFSGFRVQKVLRESARDKIIFLHGKVNEDSGDTHGEDAVVILEKTPFQVEHVAQLLTGSPELKLQFSNDIYSTYNLFPPRHLSDIKTTVVYPATEKHLQKYMRQDLRLIRETGDDYRTITLPYLESQSLSIQWVYNILDKKAEADRIVFENPDPSDGFVLIPDLKWNQQQLDDLYLIAICHRRGIRSLRDLTPEHLPLLRNILREGQEAILKRYQVTGDRLRVYLHYLPSYYHLHVHFTALGFEAPGSGVERAHLLAQVIENLECDPKHYQQRTLTFALRTDDPLLQLLQKAQQERN</sequence>
<keyword id="KW-0002">3D-structure</keyword>
<keyword id="KW-0007">Acetylation</keyword>
<keyword id="KW-0963">Cytoplasm</keyword>
<keyword id="KW-0378">Hydrolase</keyword>
<keyword id="KW-0507">mRNA processing</keyword>
<keyword id="KW-0508">mRNA splicing</keyword>
<keyword id="KW-0539">Nucleus</keyword>
<keyword id="KW-0597">Phosphoprotein</keyword>
<keyword id="KW-1185">Reference proteome</keyword>
<gene>
    <name type="primary">Dcps</name>
    <name type="synonym">Dcs1</name>
    <name type="synonym">Hint5</name>
</gene>
<comment type="function">
    <text evidence="1">Decapping scavenger enzyme that catalyzes the cleavage of a residual cap structure following the degradation of mRNAs by the 3'-&gt;5' exosome-mediated mRNA decay pathway. Hydrolyzes cap analog structures like 7-methylguanosine nucleoside triphosphate (m7GpppG) with up to 10 nucleotide substrates (small capped oligoribonucleotides) and specifically releases 5'-phosphorylated RNA fragments and 7-methylguanosine monophosphate (m7GMP). Cleaves cap analog structures like tri-methyl guanosine nucleoside triphosphate (m3(2,2,7)GpppG) with very poor efficiency. Does not hydrolyze unmethylated cap analog (GpppG) and shows no decapping activity on intact m7GpppG-capped mRNA molecules longer than 25 nucleotides. Does not hydrolyze 7-methylguanosine diphosphate (m7GDP) to m7GMP. May also play a role in the 5'-&gt;3 mRNA decay pathway; m7GDP, the downstream product released by the 5'-&gt;3' mRNA mediated decapping activity, may be also converted by DCPS to m7GMP. Binds to m7GpppG and strongly to m7GDP. Plays a role in first intron splicing of pre-mRNAs. Inhibits activation-induced cell death.</text>
</comment>
<comment type="catalytic activity">
    <reaction evidence="2">
        <text>a 5'-end (N(7)-methyl 5'-triphosphoguanosine)-ribonucleoside in mRNA + H2O = N(7)-methyl-GMP + a 5'-end diphospho-ribonucleoside in mRNA + 2 H(+)</text>
        <dbReference type="Rhea" id="RHEA:65388"/>
        <dbReference type="Rhea" id="RHEA-COMP:17165"/>
        <dbReference type="Rhea" id="RHEA-COMP:17167"/>
        <dbReference type="ChEBI" id="CHEBI:15377"/>
        <dbReference type="ChEBI" id="CHEBI:15378"/>
        <dbReference type="ChEBI" id="CHEBI:58285"/>
        <dbReference type="ChEBI" id="CHEBI:156461"/>
        <dbReference type="ChEBI" id="CHEBI:167616"/>
        <dbReference type="EC" id="3.6.1.59"/>
    </reaction>
</comment>
<comment type="activity regulation">
    <text evidence="1">The hydrolytic product 7-methylguanosine diphosphate (m7GDP) efficiently inhibits the decapping scavenger activity and acts as a competitive inhibitor in vitro. Inhibited by 2,4-diaminoquinazoline.</text>
</comment>
<comment type="subunit">
    <text evidence="1">Homodimer. Associates with components of the exosome multienzyme ribonuclease complex, such as EXOSC3 and EXOSC4. Interacts with NDOR1.</text>
</comment>
<comment type="subcellular location">
    <subcellularLocation>
        <location evidence="1">Cytoplasm</location>
    </subcellularLocation>
    <subcellularLocation>
        <location evidence="1">Nucleus</location>
    </subcellularLocation>
    <text evidence="1">Predominantly localized in the nucleus. Nucleocytoplasmic shuttling protein that can transiently enter the cytoplasm in mammalian cells in a XPO1/CRM1-dependent manner.</text>
</comment>
<comment type="domain">
    <text evidence="1">The C-terminal histidine triad (HIT) motif and the N-terminal domain are required for the decapping activity. The N-terminus is necessary but not sufficient for binding cap structures.</text>
</comment>
<comment type="similarity">
    <text evidence="4">Belongs to the HIT family.</text>
</comment>